<protein>
    <recommendedName>
        <fullName evidence="1">Trigger factor</fullName>
        <shortName evidence="1">TF</shortName>
        <ecNumber evidence="1">5.2.1.8</ecNumber>
    </recommendedName>
    <alternativeName>
        <fullName evidence="1">PPIase</fullName>
    </alternativeName>
</protein>
<dbReference type="EC" id="5.2.1.8" evidence="1"/>
<dbReference type="EMBL" id="CP000437">
    <property type="protein sequence ID" value="ABI82791.1"/>
    <property type="molecule type" value="Genomic_DNA"/>
</dbReference>
<dbReference type="RefSeq" id="WP_010031285.1">
    <property type="nucleotide sequence ID" value="NC_017463.1"/>
</dbReference>
<dbReference type="SMR" id="Q0BM93"/>
<dbReference type="KEGG" id="fth:FTH_0876"/>
<dbReference type="GO" id="GO:0005737">
    <property type="term" value="C:cytoplasm"/>
    <property type="evidence" value="ECO:0007669"/>
    <property type="project" value="UniProtKB-SubCell"/>
</dbReference>
<dbReference type="GO" id="GO:0003755">
    <property type="term" value="F:peptidyl-prolyl cis-trans isomerase activity"/>
    <property type="evidence" value="ECO:0007669"/>
    <property type="project" value="UniProtKB-UniRule"/>
</dbReference>
<dbReference type="GO" id="GO:0044183">
    <property type="term" value="F:protein folding chaperone"/>
    <property type="evidence" value="ECO:0007669"/>
    <property type="project" value="TreeGrafter"/>
</dbReference>
<dbReference type="GO" id="GO:0043022">
    <property type="term" value="F:ribosome binding"/>
    <property type="evidence" value="ECO:0007669"/>
    <property type="project" value="TreeGrafter"/>
</dbReference>
<dbReference type="GO" id="GO:0051083">
    <property type="term" value="P:'de novo' cotranslational protein folding"/>
    <property type="evidence" value="ECO:0007669"/>
    <property type="project" value="TreeGrafter"/>
</dbReference>
<dbReference type="GO" id="GO:0051301">
    <property type="term" value="P:cell division"/>
    <property type="evidence" value="ECO:0007669"/>
    <property type="project" value="UniProtKB-KW"/>
</dbReference>
<dbReference type="GO" id="GO:0061077">
    <property type="term" value="P:chaperone-mediated protein folding"/>
    <property type="evidence" value="ECO:0007669"/>
    <property type="project" value="TreeGrafter"/>
</dbReference>
<dbReference type="GO" id="GO:0015031">
    <property type="term" value="P:protein transport"/>
    <property type="evidence" value="ECO:0007669"/>
    <property type="project" value="UniProtKB-UniRule"/>
</dbReference>
<dbReference type="GO" id="GO:0043335">
    <property type="term" value="P:protein unfolding"/>
    <property type="evidence" value="ECO:0007669"/>
    <property type="project" value="TreeGrafter"/>
</dbReference>
<dbReference type="FunFam" id="3.10.50.40:FF:000001">
    <property type="entry name" value="Trigger factor"/>
    <property type="match status" value="1"/>
</dbReference>
<dbReference type="Gene3D" id="3.10.50.40">
    <property type="match status" value="1"/>
</dbReference>
<dbReference type="Gene3D" id="3.30.70.1050">
    <property type="entry name" value="Trigger factor ribosome-binding domain"/>
    <property type="match status" value="1"/>
</dbReference>
<dbReference type="Gene3D" id="1.10.3120.10">
    <property type="entry name" value="Trigger factor, C-terminal domain"/>
    <property type="match status" value="1"/>
</dbReference>
<dbReference type="HAMAP" id="MF_00303">
    <property type="entry name" value="Trigger_factor_Tig"/>
    <property type="match status" value="1"/>
</dbReference>
<dbReference type="InterPro" id="IPR046357">
    <property type="entry name" value="PPIase_dom_sf"/>
</dbReference>
<dbReference type="InterPro" id="IPR001179">
    <property type="entry name" value="PPIase_FKBP_dom"/>
</dbReference>
<dbReference type="InterPro" id="IPR005215">
    <property type="entry name" value="Trig_fac"/>
</dbReference>
<dbReference type="InterPro" id="IPR008880">
    <property type="entry name" value="Trigger_fac_C"/>
</dbReference>
<dbReference type="InterPro" id="IPR037041">
    <property type="entry name" value="Trigger_fac_C_sf"/>
</dbReference>
<dbReference type="InterPro" id="IPR008881">
    <property type="entry name" value="Trigger_fac_ribosome-bd_bac"/>
</dbReference>
<dbReference type="InterPro" id="IPR036611">
    <property type="entry name" value="Trigger_fac_ribosome-bd_sf"/>
</dbReference>
<dbReference type="InterPro" id="IPR027304">
    <property type="entry name" value="Trigger_fact/SurA_dom_sf"/>
</dbReference>
<dbReference type="NCBIfam" id="TIGR00115">
    <property type="entry name" value="tig"/>
    <property type="match status" value="1"/>
</dbReference>
<dbReference type="PANTHER" id="PTHR30560">
    <property type="entry name" value="TRIGGER FACTOR CHAPERONE AND PEPTIDYL-PROLYL CIS/TRANS ISOMERASE"/>
    <property type="match status" value="1"/>
</dbReference>
<dbReference type="PANTHER" id="PTHR30560:SF3">
    <property type="entry name" value="TRIGGER FACTOR-LIKE PROTEIN TIG, CHLOROPLASTIC"/>
    <property type="match status" value="1"/>
</dbReference>
<dbReference type="Pfam" id="PF00254">
    <property type="entry name" value="FKBP_C"/>
    <property type="match status" value="1"/>
</dbReference>
<dbReference type="Pfam" id="PF05698">
    <property type="entry name" value="Trigger_C"/>
    <property type="match status" value="1"/>
</dbReference>
<dbReference type="Pfam" id="PF05697">
    <property type="entry name" value="Trigger_N"/>
    <property type="match status" value="1"/>
</dbReference>
<dbReference type="PIRSF" id="PIRSF003095">
    <property type="entry name" value="Trigger_factor"/>
    <property type="match status" value="1"/>
</dbReference>
<dbReference type="SUPFAM" id="SSF54534">
    <property type="entry name" value="FKBP-like"/>
    <property type="match status" value="1"/>
</dbReference>
<dbReference type="SUPFAM" id="SSF109998">
    <property type="entry name" value="Triger factor/SurA peptide-binding domain-like"/>
    <property type="match status" value="1"/>
</dbReference>
<dbReference type="SUPFAM" id="SSF102735">
    <property type="entry name" value="Trigger factor ribosome-binding domain"/>
    <property type="match status" value="1"/>
</dbReference>
<dbReference type="PROSITE" id="PS50059">
    <property type="entry name" value="FKBP_PPIASE"/>
    <property type="match status" value="1"/>
</dbReference>
<sequence>MQVTLEKKEGIHCSLLIEVPANEIDSVVSKEINRTAKTIKMDGFRPGKVPAGMVKKKYGEQIRMEVISDLIPQKYSKAIQDEKLAVAGIEVELKENKEGQPLKFVANLELFPEFEVTGFEKIEVQKPVVELTDKEVKQMIENLRKQFATFSEVYKVVEKDDKVTIDFVGKKDGEAFEGGTANDIDVIIGSGQMIPGFEDGIIGMKKGEQKTITVTFPQDYQNKDLAGAETTFDITVKKIQQAELPEVNDEFVKKFGVKGGVDTFENEIKENMQRELKFILQRKVKDQVFKGLREIAKFETPKSLIKREIDAAKQNLLKQMGGAKGFDVNQLPDNLFEANAKQKVETSLILDSIMNSQEFKAEEAEVESLLDELVQAYEEPEKTKEQIKKNDKEIANLKALVIENKLTDWVLEQAKVTEKTEDFFEVIKENMQAQQAGF</sequence>
<comment type="function">
    <text evidence="1">Involved in protein export. Acts as a chaperone by maintaining the newly synthesized protein in an open conformation. Functions as a peptidyl-prolyl cis-trans isomerase.</text>
</comment>
<comment type="catalytic activity">
    <reaction evidence="1">
        <text>[protein]-peptidylproline (omega=180) = [protein]-peptidylproline (omega=0)</text>
        <dbReference type="Rhea" id="RHEA:16237"/>
        <dbReference type="Rhea" id="RHEA-COMP:10747"/>
        <dbReference type="Rhea" id="RHEA-COMP:10748"/>
        <dbReference type="ChEBI" id="CHEBI:83833"/>
        <dbReference type="ChEBI" id="CHEBI:83834"/>
        <dbReference type="EC" id="5.2.1.8"/>
    </reaction>
</comment>
<comment type="subcellular location">
    <subcellularLocation>
        <location>Cytoplasm</location>
    </subcellularLocation>
    <text evidence="1">About half TF is bound to the ribosome near the polypeptide exit tunnel while the other half is free in the cytoplasm.</text>
</comment>
<comment type="domain">
    <text evidence="1">Consists of 3 domains; the N-terminus binds the ribosome, the middle domain has PPIase activity, while the C-terminus has intrinsic chaperone activity on its own.</text>
</comment>
<comment type="similarity">
    <text evidence="1">Belongs to the FKBP-type PPIase family. Tig subfamily.</text>
</comment>
<feature type="chain" id="PRO_1000022682" description="Trigger factor">
    <location>
        <begin position="1"/>
        <end position="438"/>
    </location>
</feature>
<feature type="domain" description="PPIase FKBP-type" evidence="1">
    <location>
        <begin position="160"/>
        <end position="245"/>
    </location>
</feature>
<evidence type="ECO:0000255" key="1">
    <source>
        <dbReference type="HAMAP-Rule" id="MF_00303"/>
    </source>
</evidence>
<accession>Q0BM93</accession>
<name>TIG_FRATO</name>
<organism>
    <name type="scientific">Francisella tularensis subsp. holarctica (strain OSU18)</name>
    <dbReference type="NCBI Taxonomy" id="393011"/>
    <lineage>
        <taxon>Bacteria</taxon>
        <taxon>Pseudomonadati</taxon>
        <taxon>Pseudomonadota</taxon>
        <taxon>Gammaproteobacteria</taxon>
        <taxon>Thiotrichales</taxon>
        <taxon>Francisellaceae</taxon>
        <taxon>Francisella</taxon>
    </lineage>
</organism>
<proteinExistence type="inferred from homology"/>
<reference key="1">
    <citation type="journal article" date="2006" name="J. Bacteriol.">
        <title>Chromosome rearrangement and diversification of Francisella tularensis revealed by the type B (OSU18) genome sequence.</title>
        <authorList>
            <person name="Petrosino J.F."/>
            <person name="Xiang Q."/>
            <person name="Karpathy S.E."/>
            <person name="Jiang H."/>
            <person name="Yerrapragada S."/>
            <person name="Liu Y."/>
            <person name="Gioia J."/>
            <person name="Hemphill L."/>
            <person name="Gonzalez A."/>
            <person name="Raghavan T.M."/>
            <person name="Uzman A."/>
            <person name="Fox G.E."/>
            <person name="Highlander S."/>
            <person name="Reichard M."/>
            <person name="Morton R.J."/>
            <person name="Clinkenbeard K.D."/>
            <person name="Weinstock G.M."/>
        </authorList>
    </citation>
    <scope>NUCLEOTIDE SEQUENCE [LARGE SCALE GENOMIC DNA]</scope>
    <source>
        <strain>OSU18</strain>
    </source>
</reference>
<keyword id="KW-0131">Cell cycle</keyword>
<keyword id="KW-0132">Cell division</keyword>
<keyword id="KW-0143">Chaperone</keyword>
<keyword id="KW-0963">Cytoplasm</keyword>
<keyword id="KW-0413">Isomerase</keyword>
<keyword id="KW-0697">Rotamase</keyword>
<gene>
    <name evidence="1" type="primary">tig</name>
    <name type="ordered locus">FTH_0876</name>
</gene>